<name>RL32_TRIEI</name>
<gene>
    <name evidence="1" type="primary">rpmF</name>
    <name evidence="1" type="synonym">rpl32</name>
    <name type="ordered locus">Tery_0730</name>
</gene>
<feature type="chain" id="PRO_0000296594" description="Large ribosomal subunit protein bL32">
    <location>
        <begin position="1"/>
        <end position="58"/>
    </location>
</feature>
<feature type="region of interest" description="Disordered" evidence="2">
    <location>
        <begin position="1"/>
        <end position="58"/>
    </location>
</feature>
<feature type="compositionally biased region" description="Basic residues" evidence="2">
    <location>
        <begin position="1"/>
        <end position="19"/>
    </location>
</feature>
<feature type="compositionally biased region" description="Low complexity" evidence="2">
    <location>
        <begin position="20"/>
        <end position="32"/>
    </location>
</feature>
<comment type="similarity">
    <text evidence="1">Belongs to the bacterial ribosomal protein bL32 family.</text>
</comment>
<evidence type="ECO:0000255" key="1">
    <source>
        <dbReference type="HAMAP-Rule" id="MF_00340"/>
    </source>
</evidence>
<evidence type="ECO:0000256" key="2">
    <source>
        <dbReference type="SAM" id="MobiDB-lite"/>
    </source>
</evidence>
<evidence type="ECO:0000305" key="3"/>
<proteinExistence type="inferred from homology"/>
<sequence>MAVPKKRTSKSKKNMRKANWKNQAKLAAKKALSLGKSVETQRSHSFVHPRYEEEEEED</sequence>
<organism>
    <name type="scientific">Trichodesmium erythraeum (strain IMS101)</name>
    <dbReference type="NCBI Taxonomy" id="203124"/>
    <lineage>
        <taxon>Bacteria</taxon>
        <taxon>Bacillati</taxon>
        <taxon>Cyanobacteriota</taxon>
        <taxon>Cyanophyceae</taxon>
        <taxon>Oscillatoriophycideae</taxon>
        <taxon>Oscillatoriales</taxon>
        <taxon>Microcoleaceae</taxon>
        <taxon>Trichodesmium</taxon>
    </lineage>
</organism>
<reference key="1">
    <citation type="journal article" date="2015" name="Proc. Natl. Acad. Sci. U.S.A.">
        <title>Trichodesmium genome maintains abundant, widespread noncoding DNA in situ, despite oligotrophic lifestyle.</title>
        <authorList>
            <person name="Walworth N."/>
            <person name="Pfreundt U."/>
            <person name="Nelson W.C."/>
            <person name="Mincer T."/>
            <person name="Heidelberg J.F."/>
            <person name="Fu F."/>
            <person name="Waterbury J.B."/>
            <person name="Glavina del Rio T."/>
            <person name="Goodwin L."/>
            <person name="Kyrpides N.C."/>
            <person name="Land M.L."/>
            <person name="Woyke T."/>
            <person name="Hutchins D.A."/>
            <person name="Hess W.R."/>
            <person name="Webb E.A."/>
        </authorList>
    </citation>
    <scope>NUCLEOTIDE SEQUENCE [LARGE SCALE GENOMIC DNA]</scope>
    <source>
        <strain>IMS101</strain>
    </source>
</reference>
<protein>
    <recommendedName>
        <fullName evidence="1">Large ribosomal subunit protein bL32</fullName>
    </recommendedName>
    <alternativeName>
        <fullName evidence="3">50S ribosomal protein L32</fullName>
    </alternativeName>
</protein>
<accession>Q118B3</accession>
<dbReference type="EMBL" id="CP000393">
    <property type="protein sequence ID" value="ABG50161.1"/>
    <property type="molecule type" value="Genomic_DNA"/>
</dbReference>
<dbReference type="RefSeq" id="WP_011610554.1">
    <property type="nucleotide sequence ID" value="NC_008312.1"/>
</dbReference>
<dbReference type="SMR" id="Q118B3"/>
<dbReference type="STRING" id="203124.Tery_0730"/>
<dbReference type="KEGG" id="ter:Tery_0730"/>
<dbReference type="eggNOG" id="COG0333">
    <property type="taxonomic scope" value="Bacteria"/>
</dbReference>
<dbReference type="HOGENOM" id="CLU_199882_0_0_3"/>
<dbReference type="GO" id="GO:0015934">
    <property type="term" value="C:large ribosomal subunit"/>
    <property type="evidence" value="ECO:0007669"/>
    <property type="project" value="InterPro"/>
</dbReference>
<dbReference type="GO" id="GO:0003735">
    <property type="term" value="F:structural constituent of ribosome"/>
    <property type="evidence" value="ECO:0007669"/>
    <property type="project" value="InterPro"/>
</dbReference>
<dbReference type="GO" id="GO:0006412">
    <property type="term" value="P:translation"/>
    <property type="evidence" value="ECO:0007669"/>
    <property type="project" value="UniProtKB-UniRule"/>
</dbReference>
<dbReference type="HAMAP" id="MF_00340">
    <property type="entry name" value="Ribosomal_bL32"/>
    <property type="match status" value="1"/>
</dbReference>
<dbReference type="InterPro" id="IPR002677">
    <property type="entry name" value="Ribosomal_bL32"/>
</dbReference>
<dbReference type="InterPro" id="IPR044958">
    <property type="entry name" value="Ribosomal_bL32_plant/cyanobact"/>
</dbReference>
<dbReference type="InterPro" id="IPR011332">
    <property type="entry name" value="Ribosomal_zn-bd"/>
</dbReference>
<dbReference type="NCBIfam" id="TIGR01031">
    <property type="entry name" value="rpmF_bact"/>
    <property type="match status" value="1"/>
</dbReference>
<dbReference type="PANTHER" id="PTHR36083">
    <property type="entry name" value="50S RIBOSOMAL PROTEIN L32, CHLOROPLASTIC"/>
    <property type="match status" value="1"/>
</dbReference>
<dbReference type="PANTHER" id="PTHR36083:SF1">
    <property type="entry name" value="LARGE RIBOSOMAL SUBUNIT PROTEIN BL32C"/>
    <property type="match status" value="1"/>
</dbReference>
<dbReference type="Pfam" id="PF01783">
    <property type="entry name" value="Ribosomal_L32p"/>
    <property type="match status" value="1"/>
</dbReference>
<dbReference type="SUPFAM" id="SSF57829">
    <property type="entry name" value="Zn-binding ribosomal proteins"/>
    <property type="match status" value="1"/>
</dbReference>
<keyword id="KW-0687">Ribonucleoprotein</keyword>
<keyword id="KW-0689">Ribosomal protein</keyword>